<feature type="chain" id="PRO_0000431709" description="Myosin-binding protein 3">
    <location>
        <begin position="1"/>
        <end position="675"/>
    </location>
</feature>
<feature type="transmembrane region" description="Helical" evidence="1">
    <location>
        <begin position="17"/>
        <end position="37"/>
    </location>
</feature>
<feature type="domain" description="GTD-binding" evidence="2">
    <location>
        <begin position="355"/>
        <end position="453"/>
    </location>
</feature>
<feature type="region of interest" description="Disordered" evidence="3">
    <location>
        <begin position="225"/>
        <end position="274"/>
    </location>
</feature>
<feature type="region of interest" description="Disordered" evidence="3">
    <location>
        <begin position="286"/>
        <end position="315"/>
    </location>
</feature>
<feature type="region of interest" description="Disordered" evidence="3">
    <location>
        <begin position="474"/>
        <end position="497"/>
    </location>
</feature>
<feature type="region of interest" description="Disordered" evidence="3">
    <location>
        <begin position="542"/>
        <end position="565"/>
    </location>
</feature>
<feature type="region of interest" description="Disordered" evidence="3">
    <location>
        <begin position="582"/>
        <end position="605"/>
    </location>
</feature>
<feature type="coiled-coil region" evidence="1">
    <location>
        <begin position="605"/>
        <end position="633"/>
    </location>
</feature>
<feature type="compositionally biased region" description="Basic and acidic residues" evidence="3">
    <location>
        <begin position="238"/>
        <end position="251"/>
    </location>
</feature>
<feature type="compositionally biased region" description="Acidic residues" evidence="3">
    <location>
        <begin position="474"/>
        <end position="496"/>
    </location>
</feature>
<feature type="compositionally biased region" description="Basic and acidic residues" evidence="3">
    <location>
        <begin position="596"/>
        <end position="605"/>
    </location>
</feature>
<reference key="1">
    <citation type="journal article" date="2000" name="Nature">
        <title>Sequence and analysis of chromosome 5 of the plant Arabidopsis thaliana.</title>
        <authorList>
            <person name="Tabata S."/>
            <person name="Kaneko T."/>
            <person name="Nakamura Y."/>
            <person name="Kotani H."/>
            <person name="Kato T."/>
            <person name="Asamizu E."/>
            <person name="Miyajima N."/>
            <person name="Sasamoto S."/>
            <person name="Kimura T."/>
            <person name="Hosouchi T."/>
            <person name="Kawashima K."/>
            <person name="Kohara M."/>
            <person name="Matsumoto M."/>
            <person name="Matsuno A."/>
            <person name="Muraki A."/>
            <person name="Nakayama S."/>
            <person name="Nakazaki N."/>
            <person name="Naruo K."/>
            <person name="Okumura S."/>
            <person name="Shinpo S."/>
            <person name="Takeuchi C."/>
            <person name="Wada T."/>
            <person name="Watanabe A."/>
            <person name="Yamada M."/>
            <person name="Yasuda M."/>
            <person name="Sato S."/>
            <person name="de la Bastide M."/>
            <person name="Huang E."/>
            <person name="Spiegel L."/>
            <person name="Gnoj L."/>
            <person name="O'Shaughnessy A."/>
            <person name="Preston R."/>
            <person name="Habermann K."/>
            <person name="Murray J."/>
            <person name="Johnson D."/>
            <person name="Rohlfing T."/>
            <person name="Nelson J."/>
            <person name="Stoneking T."/>
            <person name="Pepin K."/>
            <person name="Spieth J."/>
            <person name="Sekhon M."/>
            <person name="Armstrong J."/>
            <person name="Becker M."/>
            <person name="Belter E."/>
            <person name="Cordum H."/>
            <person name="Cordes M."/>
            <person name="Courtney L."/>
            <person name="Courtney W."/>
            <person name="Dante M."/>
            <person name="Du H."/>
            <person name="Edwards J."/>
            <person name="Fryman J."/>
            <person name="Haakensen B."/>
            <person name="Lamar E."/>
            <person name="Latreille P."/>
            <person name="Leonard S."/>
            <person name="Meyer R."/>
            <person name="Mulvaney E."/>
            <person name="Ozersky P."/>
            <person name="Riley A."/>
            <person name="Strowmatt C."/>
            <person name="Wagner-McPherson C."/>
            <person name="Wollam A."/>
            <person name="Yoakum M."/>
            <person name="Bell M."/>
            <person name="Dedhia N."/>
            <person name="Parnell L."/>
            <person name="Shah R."/>
            <person name="Rodriguez M."/>
            <person name="Hoon See L."/>
            <person name="Vil D."/>
            <person name="Baker J."/>
            <person name="Kirchoff K."/>
            <person name="Toth K."/>
            <person name="King L."/>
            <person name="Bahret A."/>
            <person name="Miller B."/>
            <person name="Marra M.A."/>
            <person name="Martienssen R."/>
            <person name="McCombie W.R."/>
            <person name="Wilson R.K."/>
            <person name="Murphy G."/>
            <person name="Bancroft I."/>
            <person name="Volckaert G."/>
            <person name="Wambutt R."/>
            <person name="Duesterhoeft A."/>
            <person name="Stiekema W."/>
            <person name="Pohl T."/>
            <person name="Entian K.-D."/>
            <person name="Terryn N."/>
            <person name="Hartley N."/>
            <person name="Bent E."/>
            <person name="Johnson S."/>
            <person name="Langham S.-A."/>
            <person name="McCullagh B."/>
            <person name="Robben J."/>
            <person name="Grymonprez B."/>
            <person name="Zimmermann W."/>
            <person name="Ramsperger U."/>
            <person name="Wedler H."/>
            <person name="Balke K."/>
            <person name="Wedler E."/>
            <person name="Peters S."/>
            <person name="van Staveren M."/>
            <person name="Dirkse W."/>
            <person name="Mooijman P."/>
            <person name="Klein Lankhorst R."/>
            <person name="Weitzenegger T."/>
            <person name="Bothe G."/>
            <person name="Rose M."/>
            <person name="Hauf J."/>
            <person name="Berneiser S."/>
            <person name="Hempel S."/>
            <person name="Feldpausch M."/>
            <person name="Lamberth S."/>
            <person name="Villarroel R."/>
            <person name="Gielen J."/>
            <person name="Ardiles W."/>
            <person name="Bents O."/>
            <person name="Lemcke K."/>
            <person name="Kolesov G."/>
            <person name="Mayer K.F.X."/>
            <person name="Rudd S."/>
            <person name="Schoof H."/>
            <person name="Schueller C."/>
            <person name="Zaccaria P."/>
            <person name="Mewes H.-W."/>
            <person name="Bevan M."/>
            <person name="Fransz P.F."/>
        </authorList>
    </citation>
    <scope>NUCLEOTIDE SEQUENCE [LARGE SCALE GENOMIC DNA]</scope>
    <source>
        <strain>cv. Columbia</strain>
    </source>
</reference>
<reference key="2">
    <citation type="journal article" date="2017" name="Plant J.">
        <title>Araport11: a complete reannotation of the Arabidopsis thaliana reference genome.</title>
        <authorList>
            <person name="Cheng C.Y."/>
            <person name="Krishnakumar V."/>
            <person name="Chan A.P."/>
            <person name="Thibaud-Nissen F."/>
            <person name="Schobel S."/>
            <person name="Town C.D."/>
        </authorList>
    </citation>
    <scope>GENOME REANNOTATION</scope>
    <source>
        <strain>cv. Columbia</strain>
    </source>
</reference>
<reference key="3">
    <citation type="submission" date="2006-07" db="EMBL/GenBank/DDBJ databases">
        <title>Large-scale analysis of RIKEN Arabidopsis full-length (RAFL) cDNAs.</title>
        <authorList>
            <person name="Totoki Y."/>
            <person name="Seki M."/>
            <person name="Ishida J."/>
            <person name="Nakajima M."/>
            <person name="Enju A."/>
            <person name="Kamiya A."/>
            <person name="Narusaka M."/>
            <person name="Shin-i T."/>
            <person name="Nakagawa M."/>
            <person name="Sakamoto N."/>
            <person name="Oishi K."/>
            <person name="Kohara Y."/>
            <person name="Kobayashi M."/>
            <person name="Toyoda A."/>
            <person name="Sakaki Y."/>
            <person name="Sakurai T."/>
            <person name="Iida K."/>
            <person name="Akiyama K."/>
            <person name="Satou M."/>
            <person name="Toyoda T."/>
            <person name="Konagaya A."/>
            <person name="Carninci P."/>
            <person name="Kawai J."/>
            <person name="Hayashizaki Y."/>
            <person name="Shinozaki K."/>
        </authorList>
    </citation>
    <scope>NUCLEOTIDE SEQUENCE [LARGE SCALE MRNA]</scope>
    <source>
        <strain>cv. Columbia</strain>
    </source>
</reference>
<reference key="4">
    <citation type="journal article" date="2013" name="Plant Cell">
        <title>Identification of myosin XI receptors in Arabidopsis defines a distinct class of transport vesicles.</title>
        <authorList>
            <person name="Peremyslov V.V."/>
            <person name="Morgun E.A."/>
            <person name="Kurth E.G."/>
            <person name="Makarova K.S."/>
            <person name="Koonin E.V."/>
            <person name="Dolja V.V."/>
        </authorList>
    </citation>
    <scope>FUNCTION</scope>
    <scope>INTERACTION WITH XI-K</scope>
    <scope>DOMAIN</scope>
    <scope>DISRUPTION PHENOTYPE</scope>
</reference>
<comment type="function">
    <text evidence="4">Membrane-anchored myosin receptors that define a distinct, plant-specific transport vesicle compartment.</text>
</comment>
<comment type="subunit">
    <text evidence="4">Interacts with myosin XI-K.</text>
</comment>
<comment type="subcellular location">
    <subcellularLocation>
        <location evidence="1">Membrane</location>
        <topology evidence="1">Single-pass membrane protein</topology>
    </subcellularLocation>
</comment>
<comment type="domain">
    <text evidence="4">The GTD-binding domain is sufficient for myosin binding.</text>
</comment>
<comment type="disruption phenotype">
    <text evidence="4">No visible phenotype. Myob1, myob2 and myob3 triple mutant has a significant height reduction and a delayed flowering. Myob1, myob2, myob3 and myob4 quadruple mutant has a significant height reduction, a reduced rosette diameter and a delayed flowering.</text>
</comment>
<comment type="sequence caution" evidence="6">
    <conflict type="erroneous gene model prediction">
        <sequence resource="EMBL-CDS" id="CAC01836"/>
    </conflict>
</comment>
<evidence type="ECO:0000255" key="1"/>
<evidence type="ECO:0000255" key="2">
    <source>
        <dbReference type="PROSITE-ProRule" id="PRU01111"/>
    </source>
</evidence>
<evidence type="ECO:0000256" key="3">
    <source>
        <dbReference type="SAM" id="MobiDB-lite"/>
    </source>
</evidence>
<evidence type="ECO:0000269" key="4">
    <source>
    </source>
</evidence>
<evidence type="ECO:0000303" key="5">
    <source>
    </source>
</evidence>
<evidence type="ECO:0000305" key="6"/>
<evidence type="ECO:0000312" key="7">
    <source>
        <dbReference type="Araport" id="AT5G16720"/>
    </source>
</evidence>
<evidence type="ECO:0000312" key="8">
    <source>
        <dbReference type="EMBL" id="BAF01185.1"/>
    </source>
</evidence>
<evidence type="ECO:0000312" key="9">
    <source>
        <dbReference type="EMBL" id="CAC01836.1"/>
    </source>
</evidence>
<proteinExistence type="evidence at protein level"/>
<gene>
    <name evidence="5" type="primary">MYOB3</name>
    <name evidence="7" type="ordered locus">At5g16720</name>
    <name evidence="9" type="ORF">F5E19.60</name>
</gene>
<organism evidence="8">
    <name type="scientific">Arabidopsis thaliana</name>
    <name type="common">Mouse-ear cress</name>
    <dbReference type="NCBI Taxonomy" id="3702"/>
    <lineage>
        <taxon>Eukaryota</taxon>
        <taxon>Viridiplantae</taxon>
        <taxon>Streptophyta</taxon>
        <taxon>Embryophyta</taxon>
        <taxon>Tracheophyta</taxon>
        <taxon>Spermatophyta</taxon>
        <taxon>Magnoliopsida</taxon>
        <taxon>eudicotyledons</taxon>
        <taxon>Gunneridae</taxon>
        <taxon>Pentapetalae</taxon>
        <taxon>rosids</taxon>
        <taxon>malvids</taxon>
        <taxon>Brassicales</taxon>
        <taxon>Brassicaceae</taxon>
        <taxon>Camelineae</taxon>
        <taxon>Arabidopsis</taxon>
    </lineage>
</organism>
<name>MYOB3_ARATH</name>
<protein>
    <recommendedName>
        <fullName evidence="5">Myosin-binding protein 3</fullName>
    </recommendedName>
</protein>
<accession>Q0WNW4</accession>
<accession>Q9LFE5</accession>
<sequence length="675" mass="77021">MAANNFATKLSRNTNRITVILVYAFLEWLLMFFIFLNSFFTYFIVKFASFFGLKQVCLLCPKLDRIFERKPENRFTYKELLCQNHIAELASLSFCRTHGKLSESANLCSDCSNREEEQSNIGLGFCTCCQKSLADKPYPNYLLLKSSIWGKTLGDREDGGLILEMIDDDKFGDGFEIDRESYPLGFFRDKAEEGKKQDQQQNGEVISDVESYGLSLREVSEEDGLRSIISNNSPGNEAKSRVSEDEQRNDDTSNVATYGEDQISGRVEEKEEETGVADLLYDQFESKNFTGSQIEEEEEDREETTKELDPETPTSVSTLFNKKLHFLARNEYAAAEDAGDGNVLVSEMDGGDPLRTIERLRETVRAEQEALRDLYAELEEERSASAISANQTMAMITRLQEEKAKVQMEALQYQRMMEEQAEYDQEALQLLNHLMVKREKEKEQLQRELEVYRAKVLEYESKAKNKIIVVENDCEADDDDKEEENREEDNSSEMDVDLEKITLDCVQHMSMLGESLSEFEEERLVILDQLKVLEDRLVTMQDKESAEDPGEFSNSYEEASNGHGGLTMASMAKSLLPLLDAAENESEDGSQGLPESDEKNFGSDSEKLEIIKQVDSVYERLQELETDGEFLKNCMSSAKKGDKGTDILKDILQHLRDLRTIELTNTIENQTTQEE</sequence>
<dbReference type="EMBL" id="AL391147">
    <property type="protein sequence ID" value="CAC01836.1"/>
    <property type="status" value="ALT_SEQ"/>
    <property type="molecule type" value="Genomic_DNA"/>
</dbReference>
<dbReference type="EMBL" id="CP002688">
    <property type="protein sequence ID" value="AED92330.1"/>
    <property type="molecule type" value="Genomic_DNA"/>
</dbReference>
<dbReference type="EMBL" id="AK229322">
    <property type="protein sequence ID" value="BAF01185.1"/>
    <property type="molecule type" value="mRNA"/>
</dbReference>
<dbReference type="PIR" id="T51504">
    <property type="entry name" value="T51504"/>
</dbReference>
<dbReference type="RefSeq" id="NP_197174.2">
    <property type="nucleotide sequence ID" value="NM_121678.3"/>
</dbReference>
<dbReference type="SMR" id="Q0WNW4"/>
<dbReference type="FunCoup" id="Q0WNW4">
    <property type="interactions" value="11"/>
</dbReference>
<dbReference type="STRING" id="3702.Q0WNW4"/>
<dbReference type="iPTMnet" id="Q0WNW4"/>
<dbReference type="PaxDb" id="3702-AT5G16720.1"/>
<dbReference type="ProteomicsDB" id="251221"/>
<dbReference type="EnsemblPlants" id="AT5G16720.1">
    <property type="protein sequence ID" value="AT5G16720.1"/>
    <property type="gene ID" value="AT5G16720"/>
</dbReference>
<dbReference type="GeneID" id="831534"/>
<dbReference type="Gramene" id="AT5G16720.1">
    <property type="protein sequence ID" value="AT5G16720.1"/>
    <property type="gene ID" value="AT5G16720"/>
</dbReference>
<dbReference type="KEGG" id="ath:AT5G16720"/>
<dbReference type="Araport" id="AT5G16720"/>
<dbReference type="TAIR" id="AT5G16720">
    <property type="gene designation" value="MYOB3"/>
</dbReference>
<dbReference type="eggNOG" id="ENOG502QPIG">
    <property type="taxonomic scope" value="Eukaryota"/>
</dbReference>
<dbReference type="HOGENOM" id="CLU_009392_0_0_1"/>
<dbReference type="InParanoid" id="Q0WNW4"/>
<dbReference type="OMA" id="GFCTCCQ"/>
<dbReference type="PhylomeDB" id="Q0WNW4"/>
<dbReference type="PRO" id="PR:Q0WNW4"/>
<dbReference type="Proteomes" id="UP000006548">
    <property type="component" value="Chromosome 5"/>
</dbReference>
<dbReference type="ExpressionAtlas" id="Q0WNW4">
    <property type="expression patterns" value="baseline and differential"/>
</dbReference>
<dbReference type="GO" id="GO:0016020">
    <property type="term" value="C:membrane"/>
    <property type="evidence" value="ECO:0007669"/>
    <property type="project" value="UniProtKB-SubCell"/>
</dbReference>
<dbReference type="GO" id="GO:0017022">
    <property type="term" value="F:myosin binding"/>
    <property type="evidence" value="ECO:0000353"/>
    <property type="project" value="UniProtKB"/>
</dbReference>
<dbReference type="GO" id="GO:0080115">
    <property type="term" value="F:myosin XI tail binding"/>
    <property type="evidence" value="ECO:0000314"/>
    <property type="project" value="TAIR"/>
</dbReference>
<dbReference type="InterPro" id="IPR007656">
    <property type="entry name" value="GTD-bd"/>
</dbReference>
<dbReference type="InterPro" id="IPR039306">
    <property type="entry name" value="MYOB"/>
</dbReference>
<dbReference type="PANTHER" id="PTHR31448">
    <property type="entry name" value="MYOSIN-BINDING PROTEIN 2"/>
    <property type="match status" value="1"/>
</dbReference>
<dbReference type="PANTHER" id="PTHR31448:SF34">
    <property type="entry name" value="MYOSIN-BINDING PROTEIN 3"/>
    <property type="match status" value="1"/>
</dbReference>
<dbReference type="Pfam" id="PF04576">
    <property type="entry name" value="Zein-binding"/>
    <property type="match status" value="1"/>
</dbReference>
<dbReference type="PROSITE" id="PS51775">
    <property type="entry name" value="GTD_BINDING"/>
    <property type="match status" value="1"/>
</dbReference>
<keyword id="KW-0175">Coiled coil</keyword>
<keyword id="KW-0472">Membrane</keyword>
<keyword id="KW-1185">Reference proteome</keyword>
<keyword id="KW-0812">Transmembrane</keyword>
<keyword id="KW-1133">Transmembrane helix</keyword>